<gene>
    <name evidence="1" type="primary">radA</name>
    <name type="ordered locus">jhp_0209</name>
</gene>
<feature type="chain" id="PRO_0000187929" description="DNA repair protein RadA">
    <location>
        <begin position="1"/>
        <end position="448"/>
    </location>
</feature>
<feature type="zinc finger region" description="C4-type" evidence="1">
    <location>
        <begin position="10"/>
        <end position="27"/>
    </location>
</feature>
<feature type="region of interest" description="Lon-protease-like" evidence="1">
    <location>
        <begin position="351"/>
        <end position="448"/>
    </location>
</feature>
<feature type="short sequence motif" description="RadA KNRFG motif" evidence="1">
    <location>
        <begin position="253"/>
        <end position="257"/>
    </location>
</feature>
<feature type="binding site" evidence="1">
    <location>
        <begin position="96"/>
        <end position="103"/>
    </location>
    <ligand>
        <name>ATP</name>
        <dbReference type="ChEBI" id="CHEBI:30616"/>
    </ligand>
</feature>
<keyword id="KW-0067">ATP-binding</keyword>
<keyword id="KW-0227">DNA damage</keyword>
<keyword id="KW-0234">DNA repair</keyword>
<keyword id="KW-0238">DNA-binding</keyword>
<keyword id="KW-0378">Hydrolase</keyword>
<keyword id="KW-0479">Metal-binding</keyword>
<keyword id="KW-0547">Nucleotide-binding</keyword>
<keyword id="KW-0346">Stress response</keyword>
<keyword id="KW-0862">Zinc</keyword>
<keyword id="KW-0863">Zinc-finger</keyword>
<reference key="1">
    <citation type="journal article" date="1999" name="Nature">
        <title>Genomic sequence comparison of two unrelated isolates of the human gastric pathogen Helicobacter pylori.</title>
        <authorList>
            <person name="Alm R.A."/>
            <person name="Ling L.-S.L."/>
            <person name="Moir D.T."/>
            <person name="King B.L."/>
            <person name="Brown E.D."/>
            <person name="Doig P.C."/>
            <person name="Smith D.R."/>
            <person name="Noonan B."/>
            <person name="Guild B.C."/>
            <person name="deJonge B.L."/>
            <person name="Carmel G."/>
            <person name="Tummino P.J."/>
            <person name="Caruso A."/>
            <person name="Uria-Nickelsen M."/>
            <person name="Mills D.M."/>
            <person name="Ives C."/>
            <person name="Gibson R."/>
            <person name="Merberg D."/>
            <person name="Mills S.D."/>
            <person name="Jiang Q."/>
            <person name="Taylor D.E."/>
            <person name="Vovis G.F."/>
            <person name="Trust T.J."/>
        </authorList>
    </citation>
    <scope>NUCLEOTIDE SEQUENCE [LARGE SCALE GENOMIC DNA]</scope>
    <source>
        <strain>J99 / ATCC 700824</strain>
    </source>
</reference>
<comment type="function">
    <text evidence="1">DNA-dependent ATPase involved in processing of recombination intermediates, plays a role in repairing DNA breaks. Stimulates the branch migration of RecA-mediated strand transfer reactions, allowing the 3' invading strand to extend heteroduplex DNA faster. Binds ssDNA in the presence of ADP but not other nucleotides, has ATPase activity that is stimulated by ssDNA and various branched DNA structures, but inhibited by SSB. Does not have RecA's homology-searching function.</text>
</comment>
<comment type="domain">
    <text evidence="1">Has a putative N-terminal zinc-finger, a middle region with homology to RecA with ATPase motifs including the RadA KNRFG motif, while the C-terminus is homologous to Lon protease.</text>
</comment>
<comment type="similarity">
    <text evidence="1">Belongs to the RecA family. RadA subfamily.</text>
</comment>
<evidence type="ECO:0000255" key="1">
    <source>
        <dbReference type="HAMAP-Rule" id="MF_01498"/>
    </source>
</evidence>
<dbReference type="EC" id="3.6.4.-" evidence="1"/>
<dbReference type="EMBL" id="AE001439">
    <property type="protein sequence ID" value="AAD05792.1"/>
    <property type="molecule type" value="Genomic_DNA"/>
</dbReference>
<dbReference type="PIR" id="D71960">
    <property type="entry name" value="D71960"/>
</dbReference>
<dbReference type="RefSeq" id="WP_010882501.1">
    <property type="nucleotide sequence ID" value="NC_000921.1"/>
</dbReference>
<dbReference type="SMR" id="Q9ZMK9"/>
<dbReference type="KEGG" id="hpj:jhp_0209"/>
<dbReference type="PATRIC" id="fig|85963.30.peg.808"/>
<dbReference type="eggNOG" id="COG1066">
    <property type="taxonomic scope" value="Bacteria"/>
</dbReference>
<dbReference type="Proteomes" id="UP000000804">
    <property type="component" value="Chromosome"/>
</dbReference>
<dbReference type="GO" id="GO:0005829">
    <property type="term" value="C:cytosol"/>
    <property type="evidence" value="ECO:0007669"/>
    <property type="project" value="TreeGrafter"/>
</dbReference>
<dbReference type="GO" id="GO:0005524">
    <property type="term" value="F:ATP binding"/>
    <property type="evidence" value="ECO:0007669"/>
    <property type="project" value="UniProtKB-UniRule"/>
</dbReference>
<dbReference type="GO" id="GO:0016887">
    <property type="term" value="F:ATP hydrolysis activity"/>
    <property type="evidence" value="ECO:0007669"/>
    <property type="project" value="InterPro"/>
</dbReference>
<dbReference type="GO" id="GO:0140664">
    <property type="term" value="F:ATP-dependent DNA damage sensor activity"/>
    <property type="evidence" value="ECO:0007669"/>
    <property type="project" value="InterPro"/>
</dbReference>
<dbReference type="GO" id="GO:0003684">
    <property type="term" value="F:damaged DNA binding"/>
    <property type="evidence" value="ECO:0007669"/>
    <property type="project" value="InterPro"/>
</dbReference>
<dbReference type="GO" id="GO:0008270">
    <property type="term" value="F:zinc ion binding"/>
    <property type="evidence" value="ECO:0007669"/>
    <property type="project" value="UniProtKB-KW"/>
</dbReference>
<dbReference type="GO" id="GO:0000725">
    <property type="term" value="P:recombinational repair"/>
    <property type="evidence" value="ECO:0007669"/>
    <property type="project" value="UniProtKB-UniRule"/>
</dbReference>
<dbReference type="CDD" id="cd01121">
    <property type="entry name" value="RadA_SMS_N"/>
    <property type="match status" value="1"/>
</dbReference>
<dbReference type="FunFam" id="3.40.50.300:FF:000050">
    <property type="entry name" value="DNA repair protein RadA"/>
    <property type="match status" value="1"/>
</dbReference>
<dbReference type="Gene3D" id="3.30.230.10">
    <property type="match status" value="1"/>
</dbReference>
<dbReference type="Gene3D" id="3.40.50.300">
    <property type="entry name" value="P-loop containing nucleotide triphosphate hydrolases"/>
    <property type="match status" value="1"/>
</dbReference>
<dbReference type="HAMAP" id="MF_01498">
    <property type="entry name" value="RadA_bact"/>
    <property type="match status" value="1"/>
</dbReference>
<dbReference type="InterPro" id="IPR003593">
    <property type="entry name" value="AAA+_ATPase"/>
</dbReference>
<dbReference type="InterPro" id="IPR004504">
    <property type="entry name" value="DNA_repair_RadA"/>
</dbReference>
<dbReference type="InterPro" id="IPR027417">
    <property type="entry name" value="P-loop_NTPase"/>
</dbReference>
<dbReference type="InterPro" id="IPR020588">
    <property type="entry name" value="RecA_ATP-bd"/>
</dbReference>
<dbReference type="InterPro" id="IPR020568">
    <property type="entry name" value="Ribosomal_Su5_D2-typ_SF"/>
</dbReference>
<dbReference type="InterPro" id="IPR014721">
    <property type="entry name" value="Ribsml_uS5_D2-typ_fold_subgr"/>
</dbReference>
<dbReference type="InterPro" id="IPR041166">
    <property type="entry name" value="Rubredoxin_2"/>
</dbReference>
<dbReference type="NCBIfam" id="TIGR00416">
    <property type="entry name" value="sms"/>
    <property type="match status" value="1"/>
</dbReference>
<dbReference type="PANTHER" id="PTHR32472">
    <property type="entry name" value="DNA REPAIR PROTEIN RADA"/>
    <property type="match status" value="1"/>
</dbReference>
<dbReference type="PANTHER" id="PTHR32472:SF10">
    <property type="entry name" value="DNA REPAIR PROTEIN RADA-LIKE PROTEIN"/>
    <property type="match status" value="1"/>
</dbReference>
<dbReference type="Pfam" id="PF13481">
    <property type="entry name" value="AAA_25"/>
    <property type="match status" value="1"/>
</dbReference>
<dbReference type="Pfam" id="PF13541">
    <property type="entry name" value="ChlI"/>
    <property type="match status" value="1"/>
</dbReference>
<dbReference type="Pfam" id="PF18073">
    <property type="entry name" value="Zn_ribbon_LapB"/>
    <property type="match status" value="1"/>
</dbReference>
<dbReference type="PRINTS" id="PR01874">
    <property type="entry name" value="DNAREPAIRADA"/>
</dbReference>
<dbReference type="SMART" id="SM00382">
    <property type="entry name" value="AAA"/>
    <property type="match status" value="1"/>
</dbReference>
<dbReference type="SUPFAM" id="SSF52540">
    <property type="entry name" value="P-loop containing nucleoside triphosphate hydrolases"/>
    <property type="match status" value="1"/>
</dbReference>
<dbReference type="SUPFAM" id="SSF54211">
    <property type="entry name" value="Ribosomal protein S5 domain 2-like"/>
    <property type="match status" value="1"/>
</dbReference>
<dbReference type="PROSITE" id="PS50162">
    <property type="entry name" value="RECA_2"/>
    <property type="match status" value="1"/>
</dbReference>
<organism>
    <name type="scientific">Helicobacter pylori (strain J99 / ATCC 700824)</name>
    <name type="common">Campylobacter pylori J99</name>
    <dbReference type="NCBI Taxonomy" id="85963"/>
    <lineage>
        <taxon>Bacteria</taxon>
        <taxon>Pseudomonadati</taxon>
        <taxon>Campylobacterota</taxon>
        <taxon>Epsilonproteobacteria</taxon>
        <taxon>Campylobacterales</taxon>
        <taxon>Helicobacteraceae</taxon>
        <taxon>Helicobacter</taxon>
    </lineage>
</organism>
<accession>Q9ZMK9</accession>
<proteinExistence type="inferred from homology"/>
<sequence length="448" mass="49557">MAKKTSLFECQHCGFTSPKWLGKCVQCNAWESFIELNQTQKEVLNALKKPLPQVQKSVSIAEIEHEEVIKFSSTQSELDIVLGGGIAKGGLYLVGGSPGVGKSTLLLKVASGLAKNQQKVLYVSGEESLSQIKMRATRLDCIEEELYLLNEINWPVIKANMESENYFACVIDSIQTLYSPEISSAPGSISQVREITFELMRLAKTRDIAIFIIGHITKEGSIAGPRVLEHMVDSVLYFEGDPSRELRILRSFKNRFGPTSEIGLFEMKEQGLVSAKEASSLFFSKEEPMEGSAITITLEGSRALILEIQALVSECSFGAPKRLANGFDTNRLNMLIALLEKKLEIPLNRHDVFINVSGGIKISEPACDLAVIASILSSFKNRKIDNKTAFLGEVSLNGRILEAPNLNARLKEMENYGFLKAILPKKPSQKTSIKCYEANVVGKIVEWM</sequence>
<protein>
    <recommendedName>
        <fullName evidence="1">DNA repair protein RadA</fullName>
        <ecNumber evidence="1">3.6.4.-</ecNumber>
    </recommendedName>
    <alternativeName>
        <fullName evidence="1">Branch migration protein RadA</fullName>
    </alternativeName>
</protein>
<name>RADA_HELPJ</name>